<evidence type="ECO:0000255" key="1">
    <source>
        <dbReference type="HAMAP-Rule" id="MF_00040"/>
    </source>
</evidence>
<evidence type="ECO:0000256" key="2">
    <source>
        <dbReference type="SAM" id="MobiDB-lite"/>
    </source>
</evidence>
<reference key="1">
    <citation type="journal article" date="2007" name="Genome Res.">
        <title>Reductive evolution and niche adaptation inferred from the genome of Mycobacterium ulcerans, the causative agent of Buruli ulcer.</title>
        <authorList>
            <person name="Stinear T.P."/>
            <person name="Seemann T."/>
            <person name="Pidot S."/>
            <person name="Frigui W."/>
            <person name="Reysset G."/>
            <person name="Garnier T."/>
            <person name="Meurice G."/>
            <person name="Simon D."/>
            <person name="Bouchier C."/>
            <person name="Ma L."/>
            <person name="Tichit M."/>
            <person name="Porter J.L."/>
            <person name="Ryan J."/>
            <person name="Johnson P.D.R."/>
            <person name="Davies J.K."/>
            <person name="Jenkin G.A."/>
            <person name="Small P.L.C."/>
            <person name="Jones L.M."/>
            <person name="Tekaia F."/>
            <person name="Laval F."/>
            <person name="Daffe M."/>
            <person name="Parkhill J."/>
            <person name="Cole S.T."/>
        </authorList>
    </citation>
    <scope>NUCLEOTIDE SEQUENCE [LARGE SCALE GENOMIC DNA]</scope>
    <source>
        <strain>Agy99</strain>
    </source>
</reference>
<accession>A0PQ87</accession>
<gene>
    <name evidence="1" type="primary">frr</name>
    <name type="ordered locus">MUL_2075</name>
</gene>
<dbReference type="EMBL" id="CP000325">
    <property type="protein sequence ID" value="ABL04506.1"/>
    <property type="molecule type" value="Genomic_DNA"/>
</dbReference>
<dbReference type="RefSeq" id="WP_011740123.1">
    <property type="nucleotide sequence ID" value="NC_008611.1"/>
</dbReference>
<dbReference type="SMR" id="A0PQ87"/>
<dbReference type="KEGG" id="mul:MUL_2075"/>
<dbReference type="eggNOG" id="COG0233">
    <property type="taxonomic scope" value="Bacteria"/>
</dbReference>
<dbReference type="HOGENOM" id="CLU_073981_2_0_11"/>
<dbReference type="Proteomes" id="UP000000765">
    <property type="component" value="Chromosome"/>
</dbReference>
<dbReference type="GO" id="GO:0005737">
    <property type="term" value="C:cytoplasm"/>
    <property type="evidence" value="ECO:0007669"/>
    <property type="project" value="UniProtKB-SubCell"/>
</dbReference>
<dbReference type="GO" id="GO:0043023">
    <property type="term" value="F:ribosomal large subunit binding"/>
    <property type="evidence" value="ECO:0007669"/>
    <property type="project" value="TreeGrafter"/>
</dbReference>
<dbReference type="GO" id="GO:0006415">
    <property type="term" value="P:translational termination"/>
    <property type="evidence" value="ECO:0007669"/>
    <property type="project" value="UniProtKB-UniRule"/>
</dbReference>
<dbReference type="CDD" id="cd00520">
    <property type="entry name" value="RRF"/>
    <property type="match status" value="1"/>
</dbReference>
<dbReference type="FunFam" id="1.10.132.20:FF:000001">
    <property type="entry name" value="Ribosome-recycling factor"/>
    <property type="match status" value="1"/>
</dbReference>
<dbReference type="FunFam" id="3.30.1360.40:FF:000001">
    <property type="entry name" value="Ribosome-recycling factor"/>
    <property type="match status" value="1"/>
</dbReference>
<dbReference type="Gene3D" id="3.30.1360.40">
    <property type="match status" value="1"/>
</dbReference>
<dbReference type="Gene3D" id="1.10.132.20">
    <property type="entry name" value="Ribosome-recycling factor"/>
    <property type="match status" value="1"/>
</dbReference>
<dbReference type="HAMAP" id="MF_00040">
    <property type="entry name" value="RRF"/>
    <property type="match status" value="1"/>
</dbReference>
<dbReference type="InterPro" id="IPR002661">
    <property type="entry name" value="Ribosome_recyc_fac"/>
</dbReference>
<dbReference type="InterPro" id="IPR023584">
    <property type="entry name" value="Ribosome_recyc_fac_dom"/>
</dbReference>
<dbReference type="InterPro" id="IPR036191">
    <property type="entry name" value="RRF_sf"/>
</dbReference>
<dbReference type="NCBIfam" id="TIGR00496">
    <property type="entry name" value="frr"/>
    <property type="match status" value="1"/>
</dbReference>
<dbReference type="PANTHER" id="PTHR20982:SF3">
    <property type="entry name" value="MITOCHONDRIAL RIBOSOME RECYCLING FACTOR PSEUDO 1"/>
    <property type="match status" value="1"/>
</dbReference>
<dbReference type="PANTHER" id="PTHR20982">
    <property type="entry name" value="RIBOSOME RECYCLING FACTOR"/>
    <property type="match status" value="1"/>
</dbReference>
<dbReference type="Pfam" id="PF01765">
    <property type="entry name" value="RRF"/>
    <property type="match status" value="1"/>
</dbReference>
<dbReference type="SUPFAM" id="SSF55194">
    <property type="entry name" value="Ribosome recycling factor, RRF"/>
    <property type="match status" value="1"/>
</dbReference>
<organism>
    <name type="scientific">Mycobacterium ulcerans (strain Agy99)</name>
    <dbReference type="NCBI Taxonomy" id="362242"/>
    <lineage>
        <taxon>Bacteria</taxon>
        <taxon>Bacillati</taxon>
        <taxon>Actinomycetota</taxon>
        <taxon>Actinomycetes</taxon>
        <taxon>Mycobacteriales</taxon>
        <taxon>Mycobacteriaceae</taxon>
        <taxon>Mycobacterium</taxon>
        <taxon>Mycobacterium ulcerans group</taxon>
    </lineage>
</organism>
<protein>
    <recommendedName>
        <fullName evidence="1">Ribosome-recycling factor</fullName>
        <shortName evidence="1">RRF</shortName>
    </recommendedName>
    <alternativeName>
        <fullName evidence="1">Ribosome-releasing factor</fullName>
    </alternativeName>
</protein>
<feature type="chain" id="PRO_1000003206" description="Ribosome-recycling factor">
    <location>
        <begin position="1"/>
        <end position="185"/>
    </location>
</feature>
<feature type="region of interest" description="Disordered" evidence="2">
    <location>
        <begin position="143"/>
        <end position="163"/>
    </location>
</feature>
<comment type="function">
    <text evidence="1">Responsible for the release of ribosomes from messenger RNA at the termination of protein biosynthesis. May increase the efficiency of translation by recycling ribosomes from one round of translation to another.</text>
</comment>
<comment type="subcellular location">
    <subcellularLocation>
        <location evidence="1">Cytoplasm</location>
    </subcellularLocation>
</comment>
<comment type="similarity">
    <text evidence="1">Belongs to the RRF family.</text>
</comment>
<keyword id="KW-0963">Cytoplasm</keyword>
<keyword id="KW-0648">Protein biosynthesis</keyword>
<proteinExistence type="inferred from homology"/>
<name>RRF_MYCUA</name>
<sequence>MIDEALFDAEEKMEKAVSVAREDMATIRTGRANPGMFSRIVIDYYGTHTPITQLASINVPEARMVVIKPYEANQLHAIETAIRNSDLGVNPTNDGTIIRVAVPQLTEERRRDLVKQAKHKGEEARVSVRNIRRKAMEELHRIRKDGEAGEDEVARAEKDLDKSTHQYVAQIDELVKHKEGDLLEV</sequence>